<protein>
    <recommendedName>
        <fullName evidence="1">Adenine phosphoribosyltransferase</fullName>
        <shortName evidence="1">APRT</shortName>
        <ecNumber evidence="1">2.4.2.7</ecNumber>
    </recommendedName>
</protein>
<organism>
    <name type="scientific">Picosynechococcus sp. (strain ATCC 27264 / PCC 7002 / PR-6)</name>
    <name type="common">Agmenellum quadruplicatum</name>
    <dbReference type="NCBI Taxonomy" id="32049"/>
    <lineage>
        <taxon>Bacteria</taxon>
        <taxon>Bacillati</taxon>
        <taxon>Cyanobacteriota</taxon>
        <taxon>Cyanophyceae</taxon>
        <taxon>Oscillatoriophycideae</taxon>
        <taxon>Chroococcales</taxon>
        <taxon>Geminocystaceae</taxon>
        <taxon>Picosynechococcus</taxon>
    </lineage>
</organism>
<comment type="function">
    <text evidence="1">Catalyzes a salvage reaction resulting in the formation of AMP, that is energically less costly than de novo synthesis.</text>
</comment>
<comment type="catalytic activity">
    <reaction evidence="1">
        <text>AMP + diphosphate = 5-phospho-alpha-D-ribose 1-diphosphate + adenine</text>
        <dbReference type="Rhea" id="RHEA:16609"/>
        <dbReference type="ChEBI" id="CHEBI:16708"/>
        <dbReference type="ChEBI" id="CHEBI:33019"/>
        <dbReference type="ChEBI" id="CHEBI:58017"/>
        <dbReference type="ChEBI" id="CHEBI:456215"/>
        <dbReference type="EC" id="2.4.2.7"/>
    </reaction>
</comment>
<comment type="pathway">
    <text evidence="1">Purine metabolism; AMP biosynthesis via salvage pathway; AMP from adenine: step 1/1.</text>
</comment>
<comment type="subunit">
    <text evidence="1">Homodimer.</text>
</comment>
<comment type="subcellular location">
    <subcellularLocation>
        <location evidence="1">Cytoplasm</location>
    </subcellularLocation>
</comment>
<comment type="similarity">
    <text evidence="1">Belongs to the purine/pyrimidine phosphoribosyltransferase family.</text>
</comment>
<proteinExistence type="inferred from homology"/>
<evidence type="ECO:0000255" key="1">
    <source>
        <dbReference type="HAMAP-Rule" id="MF_00004"/>
    </source>
</evidence>
<name>APT_PICP2</name>
<gene>
    <name evidence="1" type="primary">apt</name>
    <name type="ordered locus">SYNPCC7002_A2549</name>
</gene>
<dbReference type="EC" id="2.4.2.7" evidence="1"/>
<dbReference type="EMBL" id="CP000951">
    <property type="protein sequence ID" value="ACB00526.1"/>
    <property type="molecule type" value="Genomic_DNA"/>
</dbReference>
<dbReference type="RefSeq" id="WP_012308144.1">
    <property type="nucleotide sequence ID" value="NC_010475.1"/>
</dbReference>
<dbReference type="SMR" id="B1XL39"/>
<dbReference type="STRING" id="32049.SYNPCC7002_A2549"/>
<dbReference type="KEGG" id="syp:SYNPCC7002_A2549"/>
<dbReference type="eggNOG" id="COG0503">
    <property type="taxonomic scope" value="Bacteria"/>
</dbReference>
<dbReference type="HOGENOM" id="CLU_063339_3_0_3"/>
<dbReference type="UniPathway" id="UPA00588">
    <property type="reaction ID" value="UER00646"/>
</dbReference>
<dbReference type="Proteomes" id="UP000001688">
    <property type="component" value="Chromosome"/>
</dbReference>
<dbReference type="GO" id="GO:0005737">
    <property type="term" value="C:cytoplasm"/>
    <property type="evidence" value="ECO:0007669"/>
    <property type="project" value="UniProtKB-SubCell"/>
</dbReference>
<dbReference type="GO" id="GO:0002055">
    <property type="term" value="F:adenine binding"/>
    <property type="evidence" value="ECO:0007669"/>
    <property type="project" value="TreeGrafter"/>
</dbReference>
<dbReference type="GO" id="GO:0003999">
    <property type="term" value="F:adenine phosphoribosyltransferase activity"/>
    <property type="evidence" value="ECO:0007669"/>
    <property type="project" value="UniProtKB-UniRule"/>
</dbReference>
<dbReference type="GO" id="GO:0016208">
    <property type="term" value="F:AMP binding"/>
    <property type="evidence" value="ECO:0007669"/>
    <property type="project" value="TreeGrafter"/>
</dbReference>
<dbReference type="GO" id="GO:0006168">
    <property type="term" value="P:adenine salvage"/>
    <property type="evidence" value="ECO:0007669"/>
    <property type="project" value="InterPro"/>
</dbReference>
<dbReference type="GO" id="GO:0044209">
    <property type="term" value="P:AMP salvage"/>
    <property type="evidence" value="ECO:0007669"/>
    <property type="project" value="UniProtKB-UniRule"/>
</dbReference>
<dbReference type="GO" id="GO:0006166">
    <property type="term" value="P:purine ribonucleoside salvage"/>
    <property type="evidence" value="ECO:0007669"/>
    <property type="project" value="UniProtKB-KW"/>
</dbReference>
<dbReference type="CDD" id="cd06223">
    <property type="entry name" value="PRTases_typeI"/>
    <property type="match status" value="1"/>
</dbReference>
<dbReference type="FunFam" id="3.40.50.2020:FF:000004">
    <property type="entry name" value="Adenine phosphoribosyltransferase"/>
    <property type="match status" value="1"/>
</dbReference>
<dbReference type="Gene3D" id="3.40.50.2020">
    <property type="match status" value="1"/>
</dbReference>
<dbReference type="HAMAP" id="MF_00004">
    <property type="entry name" value="Aden_phosphoribosyltr"/>
    <property type="match status" value="1"/>
</dbReference>
<dbReference type="InterPro" id="IPR005764">
    <property type="entry name" value="Ade_phspho_trans"/>
</dbReference>
<dbReference type="InterPro" id="IPR000836">
    <property type="entry name" value="PRibTrfase_dom"/>
</dbReference>
<dbReference type="InterPro" id="IPR029057">
    <property type="entry name" value="PRTase-like"/>
</dbReference>
<dbReference type="InterPro" id="IPR050054">
    <property type="entry name" value="UPRTase/APRTase"/>
</dbReference>
<dbReference type="NCBIfam" id="TIGR01090">
    <property type="entry name" value="apt"/>
    <property type="match status" value="1"/>
</dbReference>
<dbReference type="NCBIfam" id="NF002634">
    <property type="entry name" value="PRK02304.1-3"/>
    <property type="match status" value="1"/>
</dbReference>
<dbReference type="NCBIfam" id="NF002636">
    <property type="entry name" value="PRK02304.1-5"/>
    <property type="match status" value="1"/>
</dbReference>
<dbReference type="PANTHER" id="PTHR32315">
    <property type="entry name" value="ADENINE PHOSPHORIBOSYLTRANSFERASE"/>
    <property type="match status" value="1"/>
</dbReference>
<dbReference type="PANTHER" id="PTHR32315:SF3">
    <property type="entry name" value="ADENINE PHOSPHORIBOSYLTRANSFERASE"/>
    <property type="match status" value="1"/>
</dbReference>
<dbReference type="Pfam" id="PF00156">
    <property type="entry name" value="Pribosyltran"/>
    <property type="match status" value="1"/>
</dbReference>
<dbReference type="SUPFAM" id="SSF53271">
    <property type="entry name" value="PRTase-like"/>
    <property type="match status" value="1"/>
</dbReference>
<dbReference type="PROSITE" id="PS00103">
    <property type="entry name" value="PUR_PYR_PR_TRANSFER"/>
    <property type="match status" value="1"/>
</dbReference>
<accession>B1XL39</accession>
<reference key="1">
    <citation type="submission" date="2008-02" db="EMBL/GenBank/DDBJ databases">
        <title>Complete sequence of Synechococcus sp. PCC 7002.</title>
        <authorList>
            <person name="Li T."/>
            <person name="Zhao J."/>
            <person name="Zhao C."/>
            <person name="Liu Z."/>
            <person name="Zhao F."/>
            <person name="Marquardt J."/>
            <person name="Nomura C.T."/>
            <person name="Persson S."/>
            <person name="Detter J.C."/>
            <person name="Richardson P.M."/>
            <person name="Lanz C."/>
            <person name="Schuster S.C."/>
            <person name="Wang J."/>
            <person name="Li S."/>
            <person name="Huang X."/>
            <person name="Cai T."/>
            <person name="Yu Z."/>
            <person name="Luo J."/>
            <person name="Zhao J."/>
            <person name="Bryant D.A."/>
        </authorList>
    </citation>
    <scope>NUCLEOTIDE SEQUENCE [LARGE SCALE GENOMIC DNA]</scope>
    <source>
        <strain>ATCC 27264 / PCC 7002 / PR-6</strain>
    </source>
</reference>
<feature type="chain" id="PRO_1000089012" description="Adenine phosphoribosyltransferase">
    <location>
        <begin position="1"/>
        <end position="172"/>
    </location>
</feature>
<sequence length="172" mass="18849">MDLKSLIRDIPDFPKPGILFRDITTLLNHPEGMRYTMDALVQLCLEANLKPDHVVGMESRGFIFGPTLAYNLNAGFVPVRKPGKLLAAVHTVEYELEYGTDTLEIHQDAVGSGDKIVIVDDLIATGGTAKATAELLTKIGCDIIGFVFIVELLDLKGRDRLPDAPVLSLIQY</sequence>
<keyword id="KW-0963">Cytoplasm</keyword>
<keyword id="KW-0328">Glycosyltransferase</keyword>
<keyword id="KW-0660">Purine salvage</keyword>
<keyword id="KW-1185">Reference proteome</keyword>
<keyword id="KW-0808">Transferase</keyword>